<organism>
    <name type="scientific">Drosophila sechellia</name>
    <name type="common">Fruit fly</name>
    <dbReference type="NCBI Taxonomy" id="7238"/>
    <lineage>
        <taxon>Eukaryota</taxon>
        <taxon>Metazoa</taxon>
        <taxon>Ecdysozoa</taxon>
        <taxon>Arthropoda</taxon>
        <taxon>Hexapoda</taxon>
        <taxon>Insecta</taxon>
        <taxon>Pterygota</taxon>
        <taxon>Neoptera</taxon>
        <taxon>Endopterygota</taxon>
        <taxon>Diptera</taxon>
        <taxon>Brachycera</taxon>
        <taxon>Muscomorpha</taxon>
        <taxon>Ephydroidea</taxon>
        <taxon>Drosophilidae</taxon>
        <taxon>Drosophila</taxon>
        <taxon>Sophophora</taxon>
    </lineage>
</organism>
<keyword id="KW-0963">Cytoplasm</keyword>
<keyword id="KW-0206">Cytoskeleton</keyword>
<keyword id="KW-0493">Microtubule</keyword>
<keyword id="KW-0539">Nucleus</keyword>
<keyword id="KW-0597">Phosphoprotein</keyword>
<keyword id="KW-1185">Reference proteome</keyword>
<feature type="chain" id="PRO_0000355131" description="Microtubule-associated protein Jupiter">
    <location>
        <begin position="1"/>
        <end position="315"/>
    </location>
</feature>
<feature type="region of interest" description="Disordered" evidence="2">
    <location>
        <begin position="1"/>
        <end position="37"/>
    </location>
</feature>
<feature type="region of interest" description="Disordered" evidence="2">
    <location>
        <begin position="51"/>
        <end position="89"/>
    </location>
</feature>
<feature type="region of interest" description="Disordered" evidence="2">
    <location>
        <begin position="116"/>
        <end position="166"/>
    </location>
</feature>
<feature type="region of interest" description="Disordered" evidence="2">
    <location>
        <begin position="272"/>
        <end position="315"/>
    </location>
</feature>
<feature type="compositionally biased region" description="Polar residues" evidence="2">
    <location>
        <begin position="1"/>
        <end position="14"/>
    </location>
</feature>
<feature type="compositionally biased region" description="Basic and acidic residues" evidence="2">
    <location>
        <begin position="62"/>
        <end position="76"/>
    </location>
</feature>
<feature type="compositionally biased region" description="Low complexity" evidence="2">
    <location>
        <begin position="120"/>
        <end position="133"/>
    </location>
</feature>
<feature type="compositionally biased region" description="Polar residues" evidence="2">
    <location>
        <begin position="134"/>
        <end position="148"/>
    </location>
</feature>
<feature type="compositionally biased region" description="Polar residues" evidence="2">
    <location>
        <begin position="285"/>
        <end position="296"/>
    </location>
</feature>
<feature type="modified residue" description="Phosphoserine" evidence="1">
    <location>
        <position position="24"/>
    </location>
</feature>
<feature type="modified residue" description="Phosphothreonine" evidence="1">
    <location>
        <position position="35"/>
    </location>
</feature>
<feature type="modified residue" description="Phosphothreonine" evidence="1">
    <location>
        <position position="81"/>
    </location>
</feature>
<feature type="modified residue" description="Phosphothreonine" evidence="1">
    <location>
        <position position="85"/>
    </location>
</feature>
<feature type="modified residue" description="Phosphoserine" evidence="1">
    <location>
        <position position="94"/>
    </location>
</feature>
<feature type="modified residue" description="Phosphoserine" evidence="1">
    <location>
        <position position="122"/>
    </location>
</feature>
<feature type="modified residue" description="Phosphoserine" evidence="1">
    <location>
        <position position="133"/>
    </location>
</feature>
<sequence length="315" mass="33561">MISNFDCTDNQASSKVLRPPGGGSSDIFGSEMPQTPRNVKNRMASNIFAAEKDNGVKNNGDAPRRGQKTVDSHSRLFGEPTRPITPGKNHMKSSIPFGQNTEAVAAQKLLTTNGHYNGKSGSVSSASSSVSSSTENLKMNSGSRSVFRNMSKPARAETPIPPADDALSIDNSCRDSEVGDVPADNRTVTKSDQVNEGCQTRRDSGNNPEQPYSLNKMAGVSNVKEPLGLCPNEIKEERQACAKLDSRNPITGLGLNGDGVGGLKPKKLRIREGNPVTGEGYKANDFTQRQESSNGGTPVINKNRIPPGGFSSGLW</sequence>
<evidence type="ECO:0000250" key="1">
    <source>
        <dbReference type="UniProtKB" id="Q9I7K0"/>
    </source>
</evidence>
<evidence type="ECO:0000256" key="2">
    <source>
        <dbReference type="SAM" id="MobiDB-lite"/>
    </source>
</evidence>
<evidence type="ECO:0000305" key="3"/>
<evidence type="ECO:0000312" key="4">
    <source>
        <dbReference type="EMBL" id="EDW42588.1"/>
    </source>
</evidence>
<gene>
    <name evidence="1" type="primary">Jupiter</name>
    <name type="ORF">GM26090</name>
</gene>
<proteinExistence type="inferred from homology"/>
<name>JUPIT_DROSE</name>
<reference evidence="4" key="1">
    <citation type="journal article" date="2007" name="Nature">
        <title>Evolution of genes and genomes on the Drosophila phylogeny.</title>
        <authorList>
            <consortium name="Drosophila 12 genomes consortium"/>
        </authorList>
    </citation>
    <scope>NUCLEOTIDE SEQUENCE [LARGE SCALE GENOMIC DNA]</scope>
    <source>
        <strain evidence="4">Rob3c / Tucson 14021-0248.25</strain>
    </source>
</reference>
<protein>
    <recommendedName>
        <fullName evidence="1">Microtubule-associated protein Jupiter</fullName>
    </recommendedName>
</protein>
<accession>B4HI06</accession>
<dbReference type="EMBL" id="CH480815">
    <property type="protein sequence ID" value="EDW42588.1"/>
    <property type="molecule type" value="Genomic_DNA"/>
</dbReference>
<dbReference type="RefSeq" id="XP_002031602.1">
    <property type="nucleotide sequence ID" value="XM_002031566.1"/>
</dbReference>
<dbReference type="STRING" id="7238.B4HI06"/>
<dbReference type="EnsemblMetazoa" id="FBtr0209075">
    <property type="protein sequence ID" value="FBpp0207567"/>
    <property type="gene ID" value="FBgn0180945"/>
</dbReference>
<dbReference type="HOGENOM" id="CLU_076719_0_0_1"/>
<dbReference type="OMA" id="GANDFHQ"/>
<dbReference type="PhylomeDB" id="B4HI06"/>
<dbReference type="ChiTaRS" id="Jupiter">
    <property type="organism name" value="fly"/>
</dbReference>
<dbReference type="Proteomes" id="UP000001292">
    <property type="component" value="Unassembled WGS sequence"/>
</dbReference>
<dbReference type="GO" id="GO:0005829">
    <property type="term" value="C:cytosol"/>
    <property type="evidence" value="ECO:0000250"/>
    <property type="project" value="UniProtKB"/>
</dbReference>
<dbReference type="GO" id="GO:0005874">
    <property type="term" value="C:microtubule"/>
    <property type="evidence" value="ECO:0007669"/>
    <property type="project" value="UniProtKB-KW"/>
</dbReference>
<dbReference type="GO" id="GO:0005875">
    <property type="term" value="C:microtubule associated complex"/>
    <property type="evidence" value="ECO:0000250"/>
    <property type="project" value="UniProtKB"/>
</dbReference>
<dbReference type="GO" id="GO:0005634">
    <property type="term" value="C:nucleus"/>
    <property type="evidence" value="ECO:0000250"/>
    <property type="project" value="UniProtKB"/>
</dbReference>
<dbReference type="GO" id="GO:0005819">
    <property type="term" value="C:spindle"/>
    <property type="evidence" value="ECO:0007669"/>
    <property type="project" value="UniProtKB-SubCell"/>
</dbReference>
<dbReference type="GO" id="GO:0008017">
    <property type="term" value="F:microtubule binding"/>
    <property type="evidence" value="ECO:0000250"/>
    <property type="project" value="UniProtKB"/>
</dbReference>
<dbReference type="GO" id="GO:0005200">
    <property type="term" value="F:structural constituent of cytoskeleton"/>
    <property type="evidence" value="ECO:0000250"/>
    <property type="project" value="UniProtKB"/>
</dbReference>
<dbReference type="GO" id="GO:0031116">
    <property type="term" value="P:positive regulation of microtubule polymerization"/>
    <property type="evidence" value="ECO:0000250"/>
    <property type="project" value="UniProtKB"/>
</dbReference>
<dbReference type="InterPro" id="IPR033335">
    <property type="entry name" value="JUPITER"/>
</dbReference>
<dbReference type="PANTHER" id="PTHR34930">
    <property type="entry name" value="GEO05313P1"/>
    <property type="match status" value="1"/>
</dbReference>
<dbReference type="PANTHER" id="PTHR34930:SF2">
    <property type="entry name" value="MICROTUBULE-ASSOCIATED PROTEIN JUPITER"/>
    <property type="match status" value="1"/>
</dbReference>
<dbReference type="Pfam" id="PF17054">
    <property type="entry name" value="JUPITER"/>
    <property type="match status" value="1"/>
</dbReference>
<comment type="function">
    <text evidence="1">Binds to all microtubule populations.</text>
</comment>
<comment type="subcellular location">
    <subcellularLocation>
        <location evidence="1">Nucleus</location>
    </subcellularLocation>
    <subcellularLocation>
        <location evidence="1">Cytoplasm</location>
    </subcellularLocation>
    <subcellularLocation>
        <location evidence="1">Cytoplasm</location>
        <location evidence="1">Cytoskeleton</location>
    </subcellularLocation>
    <subcellularLocation>
        <location evidence="1">Cytoplasm</location>
        <location evidence="1">Cytoskeleton</location>
        <location evidence="1">Spindle</location>
    </subcellularLocation>
</comment>
<comment type="similarity">
    <text evidence="3">Belongs to the MAP Jupiter family.</text>
</comment>